<comment type="similarity">
    <text evidence="1">Belongs to the bacterial ribosomal protein bL33 family.</text>
</comment>
<proteinExistence type="inferred from homology"/>
<protein>
    <recommendedName>
        <fullName evidence="1">Large ribosomal subunit protein bL33</fullName>
    </recommendedName>
    <alternativeName>
        <fullName evidence="2">50S ribosomal protein L33</fullName>
    </alternativeName>
</protein>
<name>RL33_LACPL</name>
<accession>Q88YX4</accession>
<accession>F9UL80</accession>
<dbReference type="EMBL" id="AL935263">
    <property type="protein sequence ID" value="CCC78095.1"/>
    <property type="molecule type" value="Genomic_DNA"/>
</dbReference>
<dbReference type="RefSeq" id="WP_003637768.1">
    <property type="nucleotide sequence ID" value="NC_004567.2"/>
</dbReference>
<dbReference type="RefSeq" id="YP_004888609.1">
    <property type="nucleotide sequence ID" value="NC_004567.2"/>
</dbReference>
<dbReference type="SMR" id="Q88YX4"/>
<dbReference type="STRING" id="220668.lp_0615"/>
<dbReference type="EnsemblBacteria" id="CCC78095">
    <property type="protein sequence ID" value="CCC78095"/>
    <property type="gene ID" value="lp_0615"/>
</dbReference>
<dbReference type="GeneID" id="89668256"/>
<dbReference type="KEGG" id="lpl:lp_0615"/>
<dbReference type="PATRIC" id="fig|220668.9.peg.515"/>
<dbReference type="eggNOG" id="COG0267">
    <property type="taxonomic scope" value="Bacteria"/>
</dbReference>
<dbReference type="HOGENOM" id="CLU_190949_0_1_9"/>
<dbReference type="OrthoDB" id="9801333at2"/>
<dbReference type="PhylomeDB" id="Q88YX4"/>
<dbReference type="Proteomes" id="UP000000432">
    <property type="component" value="Chromosome"/>
</dbReference>
<dbReference type="GO" id="GO:0005737">
    <property type="term" value="C:cytoplasm"/>
    <property type="evidence" value="ECO:0007669"/>
    <property type="project" value="UniProtKB-ARBA"/>
</dbReference>
<dbReference type="GO" id="GO:1990904">
    <property type="term" value="C:ribonucleoprotein complex"/>
    <property type="evidence" value="ECO:0007669"/>
    <property type="project" value="UniProtKB-KW"/>
</dbReference>
<dbReference type="GO" id="GO:0005840">
    <property type="term" value="C:ribosome"/>
    <property type="evidence" value="ECO:0007669"/>
    <property type="project" value="UniProtKB-KW"/>
</dbReference>
<dbReference type="GO" id="GO:0003735">
    <property type="term" value="F:structural constituent of ribosome"/>
    <property type="evidence" value="ECO:0007669"/>
    <property type="project" value="InterPro"/>
</dbReference>
<dbReference type="GO" id="GO:0006412">
    <property type="term" value="P:translation"/>
    <property type="evidence" value="ECO:0007669"/>
    <property type="project" value="UniProtKB-UniRule"/>
</dbReference>
<dbReference type="Gene3D" id="2.20.28.120">
    <property type="entry name" value="Ribosomal protein L33"/>
    <property type="match status" value="1"/>
</dbReference>
<dbReference type="HAMAP" id="MF_00294">
    <property type="entry name" value="Ribosomal_bL33"/>
    <property type="match status" value="1"/>
</dbReference>
<dbReference type="InterPro" id="IPR001705">
    <property type="entry name" value="Ribosomal_bL33"/>
</dbReference>
<dbReference type="InterPro" id="IPR038584">
    <property type="entry name" value="Ribosomal_bL33_sf"/>
</dbReference>
<dbReference type="InterPro" id="IPR011332">
    <property type="entry name" value="Ribosomal_zn-bd"/>
</dbReference>
<dbReference type="NCBIfam" id="NF001764">
    <property type="entry name" value="PRK00504.1"/>
    <property type="match status" value="1"/>
</dbReference>
<dbReference type="NCBIfam" id="NF001860">
    <property type="entry name" value="PRK00595.1"/>
    <property type="match status" value="1"/>
</dbReference>
<dbReference type="NCBIfam" id="TIGR01023">
    <property type="entry name" value="rpmG_bact"/>
    <property type="match status" value="1"/>
</dbReference>
<dbReference type="PANTHER" id="PTHR43168">
    <property type="entry name" value="50S RIBOSOMAL PROTEIN L33, CHLOROPLASTIC"/>
    <property type="match status" value="1"/>
</dbReference>
<dbReference type="PANTHER" id="PTHR43168:SF5">
    <property type="entry name" value="LARGE RIBOSOMAL SUBUNIT PROTEIN BL33B"/>
    <property type="match status" value="1"/>
</dbReference>
<dbReference type="Pfam" id="PF00471">
    <property type="entry name" value="Ribosomal_L33"/>
    <property type="match status" value="1"/>
</dbReference>
<dbReference type="SUPFAM" id="SSF57829">
    <property type="entry name" value="Zn-binding ribosomal proteins"/>
    <property type="match status" value="1"/>
</dbReference>
<organism>
    <name type="scientific">Lactiplantibacillus plantarum (strain ATCC BAA-793 / NCIMB 8826 / WCFS1)</name>
    <name type="common">Lactobacillus plantarum</name>
    <dbReference type="NCBI Taxonomy" id="220668"/>
    <lineage>
        <taxon>Bacteria</taxon>
        <taxon>Bacillati</taxon>
        <taxon>Bacillota</taxon>
        <taxon>Bacilli</taxon>
        <taxon>Lactobacillales</taxon>
        <taxon>Lactobacillaceae</taxon>
        <taxon>Lactiplantibacillus</taxon>
    </lineage>
</organism>
<evidence type="ECO:0000255" key="1">
    <source>
        <dbReference type="HAMAP-Rule" id="MF_00294"/>
    </source>
</evidence>
<evidence type="ECO:0000305" key="2"/>
<gene>
    <name evidence="1" type="primary">rpmG</name>
    <name type="ordered locus">lp_0615</name>
</gene>
<reference key="1">
    <citation type="journal article" date="2003" name="Proc. Natl. Acad. Sci. U.S.A.">
        <title>Complete genome sequence of Lactobacillus plantarum WCFS1.</title>
        <authorList>
            <person name="Kleerebezem M."/>
            <person name="Boekhorst J."/>
            <person name="van Kranenburg R."/>
            <person name="Molenaar D."/>
            <person name="Kuipers O.P."/>
            <person name="Leer R."/>
            <person name="Tarchini R."/>
            <person name="Peters S.A."/>
            <person name="Sandbrink H.M."/>
            <person name="Fiers M.W.E.J."/>
            <person name="Stiekema W."/>
            <person name="Klein Lankhorst R.M."/>
            <person name="Bron P.A."/>
            <person name="Hoffer S.M."/>
            <person name="Nierop Groot M.N."/>
            <person name="Kerkhoven R."/>
            <person name="De Vries M."/>
            <person name="Ursing B."/>
            <person name="De Vos W.M."/>
            <person name="Siezen R.J."/>
        </authorList>
    </citation>
    <scope>NUCLEOTIDE SEQUENCE [LARGE SCALE GENOMIC DNA]</scope>
    <source>
        <strain>ATCC BAA-793 / NCIMB 8826 / WCFS1</strain>
    </source>
</reference>
<reference key="2">
    <citation type="journal article" date="2012" name="J. Bacteriol.">
        <title>Complete resequencing and reannotation of the Lactobacillus plantarum WCFS1 genome.</title>
        <authorList>
            <person name="Siezen R.J."/>
            <person name="Francke C."/>
            <person name="Renckens B."/>
            <person name="Boekhorst J."/>
            <person name="Wels M."/>
            <person name="Kleerebezem M."/>
            <person name="van Hijum S.A."/>
        </authorList>
    </citation>
    <scope>NUCLEOTIDE SEQUENCE [LARGE SCALE GENOMIC DNA]</scope>
    <scope>GENOME REANNOTATION</scope>
    <source>
        <strain>ATCC BAA-793 / NCIMB 8826 / WCFS1</strain>
    </source>
</reference>
<feature type="chain" id="PRO_0000170175" description="Large ribosomal subunit protein bL33">
    <location>
        <begin position="1"/>
        <end position="49"/>
    </location>
</feature>
<sequence length="49" mass="5657">MAQKKVALACTVCGSRNYTIDANPNRTDRLEVKKFCKYCGKHTLHRETR</sequence>
<keyword id="KW-1185">Reference proteome</keyword>
<keyword id="KW-0687">Ribonucleoprotein</keyword>
<keyword id="KW-0689">Ribosomal protein</keyword>